<keyword id="KW-0378">Hydrolase</keyword>
<keyword id="KW-1185">Reference proteome</keyword>
<evidence type="ECO:0000255" key="1">
    <source>
        <dbReference type="HAMAP-Rule" id="MF_01527"/>
    </source>
</evidence>
<reference key="1">
    <citation type="journal article" date="2002" name="Nature">
        <title>Comparison of the genomes of two Xanthomonas pathogens with differing host specificities.</title>
        <authorList>
            <person name="da Silva A.C.R."/>
            <person name="Ferro J.A."/>
            <person name="Reinach F.C."/>
            <person name="Farah C.S."/>
            <person name="Furlan L.R."/>
            <person name="Quaggio R.B."/>
            <person name="Monteiro-Vitorello C.B."/>
            <person name="Van Sluys M.A."/>
            <person name="Almeida N.F. Jr."/>
            <person name="Alves L.M.C."/>
            <person name="do Amaral A.M."/>
            <person name="Bertolini M.C."/>
            <person name="Camargo L.E.A."/>
            <person name="Camarotte G."/>
            <person name="Cannavan F."/>
            <person name="Cardozo J."/>
            <person name="Chambergo F."/>
            <person name="Ciapina L.P."/>
            <person name="Cicarelli R.M.B."/>
            <person name="Coutinho L.L."/>
            <person name="Cursino-Santos J.R."/>
            <person name="El-Dorry H."/>
            <person name="Faria J.B."/>
            <person name="Ferreira A.J.S."/>
            <person name="Ferreira R.C.C."/>
            <person name="Ferro M.I.T."/>
            <person name="Formighieri E.F."/>
            <person name="Franco M.C."/>
            <person name="Greggio C.C."/>
            <person name="Gruber A."/>
            <person name="Katsuyama A.M."/>
            <person name="Kishi L.T."/>
            <person name="Leite R.P."/>
            <person name="Lemos E.G.M."/>
            <person name="Lemos M.V.F."/>
            <person name="Locali E.C."/>
            <person name="Machado M.A."/>
            <person name="Madeira A.M.B.N."/>
            <person name="Martinez-Rossi N.M."/>
            <person name="Martins E.C."/>
            <person name="Meidanis J."/>
            <person name="Menck C.F.M."/>
            <person name="Miyaki C.Y."/>
            <person name="Moon D.H."/>
            <person name="Moreira L.M."/>
            <person name="Novo M.T.M."/>
            <person name="Okura V.K."/>
            <person name="Oliveira M.C."/>
            <person name="Oliveira V.R."/>
            <person name="Pereira H.A."/>
            <person name="Rossi A."/>
            <person name="Sena J.A.D."/>
            <person name="Silva C."/>
            <person name="de Souza R.F."/>
            <person name="Spinola L.A.F."/>
            <person name="Takita M.A."/>
            <person name="Tamura R.E."/>
            <person name="Teixeira E.C."/>
            <person name="Tezza R.I.D."/>
            <person name="Trindade dos Santos M."/>
            <person name="Truffi D."/>
            <person name="Tsai S.M."/>
            <person name="White F.F."/>
            <person name="Setubal J.C."/>
            <person name="Kitajima J.P."/>
        </authorList>
    </citation>
    <scope>NUCLEOTIDE SEQUENCE [LARGE SCALE GENOMIC DNA]</scope>
    <source>
        <strain>ATCC 33913 / DSM 3586 / NCPPB 528 / LMG 568 / P 25</strain>
    </source>
</reference>
<accession>Q8P9T3</accession>
<sequence length="311" mass="34352">MSTTLPDIAVTEPSALHAPLRWVGMQDIAIPVRLDEAEPSGTVAARAQVQVDLPRPELKGIHMSRLYRLLDRHLEQPLSPAMLSQLLQAMIDSHADCGSRAARVSLAFEVMLRMPALRSEGLAGWRAYPVRIDAQSRAGRSEMRLQIDVLYASTCPCSAALSRQLLSKAFAQQHAGQTALRVEDVAQWLQRNGSYATPHSQRSVAQVRVDLVARVQSFDIRALVLLCESALATPVQAAVRRIDEQAFARLNGANLMYVEDAARRLRKELAERYASFHVAVRHFESLHAHDAVAETGSDADVFHMIAESHGQ</sequence>
<proteinExistence type="inferred from homology"/>
<feature type="chain" id="PRO_0000147734" description="GTP cyclohydrolase FolE2">
    <location>
        <begin position="1"/>
        <end position="311"/>
    </location>
</feature>
<feature type="site" description="May be catalytically important" evidence="1">
    <location>
        <position position="155"/>
    </location>
</feature>
<organism>
    <name type="scientific">Xanthomonas campestris pv. campestris (strain ATCC 33913 / DSM 3586 / NCPPB 528 / LMG 568 / P 25)</name>
    <dbReference type="NCBI Taxonomy" id="190485"/>
    <lineage>
        <taxon>Bacteria</taxon>
        <taxon>Pseudomonadati</taxon>
        <taxon>Pseudomonadota</taxon>
        <taxon>Gammaproteobacteria</taxon>
        <taxon>Lysobacterales</taxon>
        <taxon>Lysobacteraceae</taxon>
        <taxon>Xanthomonas</taxon>
    </lineage>
</organism>
<comment type="function">
    <text evidence="1">Converts GTP to 7,8-dihydroneopterin triphosphate.</text>
</comment>
<comment type="catalytic activity">
    <reaction evidence="1">
        <text>GTP + H2O = 7,8-dihydroneopterin 3'-triphosphate + formate + H(+)</text>
        <dbReference type="Rhea" id="RHEA:17473"/>
        <dbReference type="ChEBI" id="CHEBI:15377"/>
        <dbReference type="ChEBI" id="CHEBI:15378"/>
        <dbReference type="ChEBI" id="CHEBI:15740"/>
        <dbReference type="ChEBI" id="CHEBI:37565"/>
        <dbReference type="ChEBI" id="CHEBI:58462"/>
        <dbReference type="EC" id="3.5.4.16"/>
    </reaction>
</comment>
<comment type="pathway">
    <text evidence="1">Cofactor biosynthesis; 7,8-dihydroneopterin triphosphate biosynthesis; 7,8-dihydroneopterin triphosphate from GTP: step 1/1.</text>
</comment>
<comment type="similarity">
    <text evidence="1">Belongs to the GTP cyclohydrolase IV family.</text>
</comment>
<protein>
    <recommendedName>
        <fullName evidence="1">GTP cyclohydrolase FolE2</fullName>
        <ecNumber evidence="1">3.5.4.16</ecNumber>
    </recommendedName>
</protein>
<gene>
    <name evidence="1" type="primary">folE2</name>
    <name type="ordered locus">XCC1764</name>
</gene>
<dbReference type="EC" id="3.5.4.16" evidence="1"/>
<dbReference type="EMBL" id="AE008922">
    <property type="protein sequence ID" value="AAM41055.1"/>
    <property type="molecule type" value="Genomic_DNA"/>
</dbReference>
<dbReference type="RefSeq" id="NP_637131.1">
    <property type="nucleotide sequence ID" value="NC_003902.1"/>
</dbReference>
<dbReference type="RefSeq" id="WP_011036938.1">
    <property type="nucleotide sequence ID" value="NC_003902.1"/>
</dbReference>
<dbReference type="SMR" id="Q8P9T3"/>
<dbReference type="STRING" id="190485.XCC1764"/>
<dbReference type="EnsemblBacteria" id="AAM41055">
    <property type="protein sequence ID" value="AAM41055"/>
    <property type="gene ID" value="XCC1764"/>
</dbReference>
<dbReference type="KEGG" id="xcc:XCC1764"/>
<dbReference type="PATRIC" id="fig|190485.4.peg.1880"/>
<dbReference type="eggNOG" id="COG1469">
    <property type="taxonomic scope" value="Bacteria"/>
</dbReference>
<dbReference type="HOGENOM" id="CLU_062816_0_0_6"/>
<dbReference type="OrthoDB" id="239637at2"/>
<dbReference type="UniPathway" id="UPA00848">
    <property type="reaction ID" value="UER00151"/>
</dbReference>
<dbReference type="Proteomes" id="UP000001010">
    <property type="component" value="Chromosome"/>
</dbReference>
<dbReference type="GO" id="GO:0003933">
    <property type="term" value="F:GTP cyclohydrolase activity"/>
    <property type="evidence" value="ECO:0000318"/>
    <property type="project" value="GO_Central"/>
</dbReference>
<dbReference type="GO" id="GO:0003934">
    <property type="term" value="F:GTP cyclohydrolase I activity"/>
    <property type="evidence" value="ECO:0007669"/>
    <property type="project" value="UniProtKB-UniRule"/>
</dbReference>
<dbReference type="GO" id="GO:0046654">
    <property type="term" value="P:tetrahydrofolate biosynthetic process"/>
    <property type="evidence" value="ECO:0007669"/>
    <property type="project" value="UniProtKB-UniRule"/>
</dbReference>
<dbReference type="Gene3D" id="3.10.270.10">
    <property type="entry name" value="Urate Oxidase"/>
    <property type="match status" value="1"/>
</dbReference>
<dbReference type="HAMAP" id="MF_01527_B">
    <property type="entry name" value="GTP_cyclohydrol_B"/>
    <property type="match status" value="1"/>
</dbReference>
<dbReference type="InterPro" id="IPR022838">
    <property type="entry name" value="GTP_cyclohydrolase_FolE2"/>
</dbReference>
<dbReference type="InterPro" id="IPR003801">
    <property type="entry name" value="GTP_cyclohydrolase_FolE2/MptA"/>
</dbReference>
<dbReference type="NCBIfam" id="NF010200">
    <property type="entry name" value="PRK13674.1-1"/>
    <property type="match status" value="1"/>
</dbReference>
<dbReference type="PANTHER" id="PTHR36445">
    <property type="entry name" value="GTP CYCLOHYDROLASE MPTA"/>
    <property type="match status" value="1"/>
</dbReference>
<dbReference type="PANTHER" id="PTHR36445:SF1">
    <property type="entry name" value="GTP CYCLOHYDROLASE MPTA"/>
    <property type="match status" value="1"/>
</dbReference>
<dbReference type="Pfam" id="PF02649">
    <property type="entry name" value="GCHY-1"/>
    <property type="match status" value="1"/>
</dbReference>
<name>GCH4_XANCP</name>